<keyword id="KW-0007">Acetylation</keyword>
<keyword id="KW-0145">Chemotaxis</keyword>
<keyword id="KW-0963">Cytoplasm</keyword>
<keyword id="KW-0283">Flagellar rotation</keyword>
<keyword id="KW-0460">Magnesium</keyword>
<keyword id="KW-0479">Metal-binding</keyword>
<keyword id="KW-0597">Phosphoprotein</keyword>
<keyword id="KW-0902">Two-component regulatory system</keyword>
<proteinExistence type="inferred from homology"/>
<protein>
    <recommendedName>
        <fullName>Chemotaxis protein CheY</fullName>
    </recommendedName>
</protein>
<comment type="function">
    <text evidence="3">Involved in the transmission of sensory signals from the chemoreceptors to the flagellar motors. In its active (phosphorylated or acetylated) form, CheY exhibits enhanced binding to a switch component, FliM, at the flagellar motor which induces a change from counterclockwise to clockwise flagellar rotation (By similarity).</text>
</comment>
<comment type="cofactor">
    <cofactor evidence="3">
        <name>Mg(2+)</name>
        <dbReference type="ChEBI" id="CHEBI:18420"/>
    </cofactor>
    <text evidence="3">Binds 1 Mg(2+) ion per subunit.</text>
</comment>
<comment type="subcellular location">
    <subcellularLocation>
        <location evidence="5">Cytoplasm</location>
    </subcellularLocation>
</comment>
<comment type="PTM">
    <text evidence="3">Phosphorylated by CheA or acetylated by acetyl-CoA synthetase, depending on which acetate metabolism pathway is available.</text>
</comment>
<organism>
    <name type="scientific">Yersinia enterocolitica</name>
    <dbReference type="NCBI Taxonomy" id="630"/>
    <lineage>
        <taxon>Bacteria</taxon>
        <taxon>Pseudomonadati</taxon>
        <taxon>Pseudomonadota</taxon>
        <taxon>Gammaproteobacteria</taxon>
        <taxon>Enterobacterales</taxon>
        <taxon>Yersiniaceae</taxon>
        <taxon>Yersinia</taxon>
    </lineage>
</organism>
<sequence length="129" mass="14164">MADKNLRFLVVDDFSTMRRIVRNLLKELGFNNVEEAEDGVDALNKLRTGGFDFVVSDWNMPNMDGLDLLKTIRADGALGTLPVLMVTAEAKKENIIAAAQAGASGYVVKPFTAATLEEKLNKIFEKLGM</sequence>
<evidence type="ECO:0000250" key="1"/>
<evidence type="ECO:0000250" key="2">
    <source>
        <dbReference type="UniProtKB" id="A0A0H3AMJ9"/>
    </source>
</evidence>
<evidence type="ECO:0000250" key="3">
    <source>
        <dbReference type="UniProtKB" id="P0AE67"/>
    </source>
</evidence>
<evidence type="ECO:0000255" key="4">
    <source>
        <dbReference type="PROSITE-ProRule" id="PRU00169"/>
    </source>
</evidence>
<evidence type="ECO:0000305" key="5"/>
<accession>Q93P00</accession>
<reference key="1">
    <citation type="journal article" date="2001" name="J. Bacteriol.">
        <title>HreP, an in vivo-expressed protease of Yersinia enterocolitica, is a new member of the family of Subtilisin/Kexin-like proteases.</title>
        <authorList>
            <person name="Heusipp G."/>
            <person name="Young G.M."/>
            <person name="Miller V.L."/>
        </authorList>
    </citation>
    <scope>NUCLEOTIDE SEQUENCE [GENOMIC DNA]</scope>
</reference>
<dbReference type="EMBL" id="AF354753">
    <property type="protein sequence ID" value="AAK40116.1"/>
    <property type="molecule type" value="Genomic_DNA"/>
</dbReference>
<dbReference type="RefSeq" id="WP_005164479.1">
    <property type="nucleotide sequence ID" value="NZ_WJHZ01000004.1"/>
</dbReference>
<dbReference type="SMR" id="Q93P00"/>
<dbReference type="STRING" id="1443113.LC20_02144"/>
<dbReference type="GeneID" id="93970229"/>
<dbReference type="eggNOG" id="COG0745">
    <property type="taxonomic scope" value="Bacteria"/>
</dbReference>
<dbReference type="OMA" id="AAGAHEY"/>
<dbReference type="GO" id="GO:0005737">
    <property type="term" value="C:cytoplasm"/>
    <property type="evidence" value="ECO:0007669"/>
    <property type="project" value="UniProtKB-SubCell"/>
</dbReference>
<dbReference type="GO" id="GO:0046872">
    <property type="term" value="F:metal ion binding"/>
    <property type="evidence" value="ECO:0007669"/>
    <property type="project" value="UniProtKB-KW"/>
</dbReference>
<dbReference type="GO" id="GO:0097588">
    <property type="term" value="P:archaeal or bacterial-type flagellum-dependent cell motility"/>
    <property type="evidence" value="ECO:0007669"/>
    <property type="project" value="UniProtKB-KW"/>
</dbReference>
<dbReference type="GO" id="GO:0006935">
    <property type="term" value="P:chemotaxis"/>
    <property type="evidence" value="ECO:0007669"/>
    <property type="project" value="UniProtKB-KW"/>
</dbReference>
<dbReference type="GO" id="GO:0000160">
    <property type="term" value="P:phosphorelay signal transduction system"/>
    <property type="evidence" value="ECO:0007669"/>
    <property type="project" value="UniProtKB-KW"/>
</dbReference>
<dbReference type="CDD" id="cd19923">
    <property type="entry name" value="REC_CheY_CheY3"/>
    <property type="match status" value="1"/>
</dbReference>
<dbReference type="FunFam" id="3.40.50.2300:FF:000019">
    <property type="entry name" value="Chemotaxis response regulator CheY"/>
    <property type="match status" value="1"/>
</dbReference>
<dbReference type="Gene3D" id="3.40.50.2300">
    <property type="match status" value="1"/>
</dbReference>
<dbReference type="InterPro" id="IPR011006">
    <property type="entry name" value="CheY-like_superfamily"/>
</dbReference>
<dbReference type="InterPro" id="IPR001789">
    <property type="entry name" value="Sig_transdc_resp-reg_receiver"/>
</dbReference>
<dbReference type="InterPro" id="IPR052048">
    <property type="entry name" value="ST_Response_Regulator"/>
</dbReference>
<dbReference type="NCBIfam" id="NF007901">
    <property type="entry name" value="PRK10610.1"/>
    <property type="match status" value="1"/>
</dbReference>
<dbReference type="PANTHER" id="PTHR43228">
    <property type="entry name" value="TWO-COMPONENT RESPONSE REGULATOR"/>
    <property type="match status" value="1"/>
</dbReference>
<dbReference type="PANTHER" id="PTHR43228:SF1">
    <property type="entry name" value="TWO-COMPONENT RESPONSE REGULATOR ARR22"/>
    <property type="match status" value="1"/>
</dbReference>
<dbReference type="Pfam" id="PF00072">
    <property type="entry name" value="Response_reg"/>
    <property type="match status" value="1"/>
</dbReference>
<dbReference type="SMART" id="SM00448">
    <property type="entry name" value="REC"/>
    <property type="match status" value="1"/>
</dbReference>
<dbReference type="SUPFAM" id="SSF52172">
    <property type="entry name" value="CheY-like"/>
    <property type="match status" value="1"/>
</dbReference>
<dbReference type="PROSITE" id="PS50110">
    <property type="entry name" value="RESPONSE_REGULATORY"/>
    <property type="match status" value="1"/>
</dbReference>
<gene>
    <name type="primary">cheY</name>
</gene>
<name>CHEY_YEREN</name>
<feature type="initiator methionine" description="Removed" evidence="1">
    <location>
        <position position="1"/>
    </location>
</feature>
<feature type="chain" id="PRO_0000081047" description="Chemotaxis protein CheY">
    <location>
        <begin position="2"/>
        <end position="129"/>
    </location>
</feature>
<feature type="domain" description="Response regulatory" evidence="4">
    <location>
        <begin position="7"/>
        <end position="124"/>
    </location>
</feature>
<feature type="binding site" evidence="2">
    <location>
        <position position="12"/>
    </location>
    <ligand>
        <name>Mg(2+)</name>
        <dbReference type="ChEBI" id="CHEBI:18420"/>
    </ligand>
</feature>
<feature type="binding site" evidence="3">
    <location>
        <position position="13"/>
    </location>
    <ligand>
        <name>Mg(2+)</name>
        <dbReference type="ChEBI" id="CHEBI:18420"/>
    </ligand>
</feature>
<feature type="binding site" evidence="3">
    <location>
        <position position="57"/>
    </location>
    <ligand>
        <name>Mg(2+)</name>
        <dbReference type="ChEBI" id="CHEBI:18420"/>
    </ligand>
</feature>
<feature type="binding site" evidence="3">
    <location>
        <position position="59"/>
    </location>
    <ligand>
        <name>Mg(2+)</name>
        <dbReference type="ChEBI" id="CHEBI:18420"/>
    </ligand>
</feature>
<feature type="modified residue" description="4-aspartylphosphate" evidence="4">
    <location>
        <position position="57"/>
    </location>
</feature>
<feature type="modified residue" description="N6-acetyllysine" evidence="1">
    <location>
        <position position="92"/>
    </location>
</feature>
<feature type="modified residue" description="N6-acetyllysine" evidence="1">
    <location>
        <position position="109"/>
    </location>
</feature>